<reference key="1">
    <citation type="journal article" date="2002" name="J. Bacteriol.">
        <title>Whole-genome comparison of Mycobacterium tuberculosis clinical and laboratory strains.</title>
        <authorList>
            <person name="Fleischmann R.D."/>
            <person name="Alland D."/>
            <person name="Eisen J.A."/>
            <person name="Carpenter L."/>
            <person name="White O."/>
            <person name="Peterson J.D."/>
            <person name="DeBoy R.T."/>
            <person name="Dodson R.J."/>
            <person name="Gwinn M.L."/>
            <person name="Haft D.H."/>
            <person name="Hickey E.K."/>
            <person name="Kolonay J.F."/>
            <person name="Nelson W.C."/>
            <person name="Umayam L.A."/>
            <person name="Ermolaeva M.D."/>
            <person name="Salzberg S.L."/>
            <person name="Delcher A."/>
            <person name="Utterback T.R."/>
            <person name="Weidman J.F."/>
            <person name="Khouri H.M."/>
            <person name="Gill J."/>
            <person name="Mikula A."/>
            <person name="Bishai W."/>
            <person name="Jacobs W.R. Jr."/>
            <person name="Venter J.C."/>
            <person name="Fraser C.M."/>
        </authorList>
    </citation>
    <scope>NUCLEOTIDE SEQUENCE [LARGE SCALE GENOMIC DNA]</scope>
    <source>
        <strain>CDC 1551 / Oshkosh</strain>
    </source>
</reference>
<evidence type="ECO:0000255" key="1"/>
<evidence type="ECO:0000256" key="2">
    <source>
        <dbReference type="SAM" id="MobiDB-lite"/>
    </source>
</evidence>
<evidence type="ECO:0000305" key="3"/>
<gene>
    <name type="ordered locus">MT1884</name>
</gene>
<sequence length="677" mass="69677">MGRHSKPDPEDSVDDLSDGHAAEQQHWEDISGSYDYPGVDQPDDGPLSSEGHYSAVGGYSASGSEDYPDIPPRPDWEPTGAEPIAAAPPPLFRFGHRGPGDWQAGHRSADGRRGVSIGVIVALVAVVVMVAGVILWRFFGDALSNRSHTAAARCVGGKDTVAVIADPSIADQVKESADSYNASAGPVGDRCVAVAVTSAGSDAVINGFIGKWPTELGGQPGLWIPSSSISAARLTGAAGSQAISDSRSLVISPVLLAVRPELQQALANQNWAALPGLQTNPNSLSGLDLPAWGSLRLAMPSSGNGDAAYLAGEAVAAASAPAGAPATAGIGAVRTLMGARPKLADDSLTAAMDTLLKPGDVATAPVHAVVTTEQQLFQRGQSLSDAENTLGSWLPPGPAAVADYPTVLLSGAWLSQEQTSAASAFARYLHKPEQLAKLARAGFRVSDVKPPSSPVTSFPALPSTLSVGDDSMRATLADTMVTASAGVAATIMLDQSMPNDEGGNSRLSNVVAALENRIKAMPPSSVVGLWTFDGREGRTEVPAGPLADPVNGQPRPAALTAALGKQYSSGGGAVSFTTLRLIYQEMLANYRVGQANSVLVITAGPHTDQTLDGPGLQDFIRKSADPAKPIAVNIIDFGADPDRATWEAVAQLSGGSYQNLETSASPDLATAVNIFLS</sequence>
<accession>P9WLQ8</accession>
<accession>L0T7U5</accession>
<accession>Q50597</accession>
<keyword id="KW-1003">Cell membrane</keyword>
<keyword id="KW-0472">Membrane</keyword>
<keyword id="KW-1185">Reference proteome</keyword>
<keyword id="KW-0812">Transmembrane</keyword>
<keyword id="KW-1133">Transmembrane helix</keyword>
<protein>
    <recommendedName>
        <fullName>Uncharacterized protein MT1884</fullName>
    </recommendedName>
</protein>
<organism>
    <name type="scientific">Mycobacterium tuberculosis (strain CDC 1551 / Oshkosh)</name>
    <dbReference type="NCBI Taxonomy" id="83331"/>
    <lineage>
        <taxon>Bacteria</taxon>
        <taxon>Bacillati</taxon>
        <taxon>Actinomycetota</taxon>
        <taxon>Actinomycetes</taxon>
        <taxon>Mycobacteriales</taxon>
        <taxon>Mycobacteriaceae</taxon>
        <taxon>Mycobacterium</taxon>
        <taxon>Mycobacterium tuberculosis complex</taxon>
    </lineage>
</organism>
<feature type="chain" id="PRO_0000427436" description="Uncharacterized protein MT1884">
    <location>
        <begin position="1"/>
        <end position="677"/>
    </location>
</feature>
<feature type="transmembrane region" description="Helical" evidence="1">
    <location>
        <begin position="115"/>
        <end position="135"/>
    </location>
</feature>
<feature type="transmembrane region" description="Helical" evidence="1">
    <location>
        <begin position="192"/>
        <end position="212"/>
    </location>
</feature>
<feature type="transmembrane region" description="Helical" evidence="1">
    <location>
        <begin position="313"/>
        <end position="333"/>
    </location>
</feature>
<feature type="transmembrane region" description="Helical" evidence="1">
    <location>
        <begin position="474"/>
        <end position="494"/>
    </location>
</feature>
<feature type="region of interest" description="Disordered" evidence="2">
    <location>
        <begin position="1"/>
        <end position="87"/>
    </location>
</feature>
<feature type="compositionally biased region" description="Basic and acidic residues" evidence="2">
    <location>
        <begin position="17"/>
        <end position="29"/>
    </location>
</feature>
<feature type="compositionally biased region" description="Low complexity" evidence="2">
    <location>
        <begin position="51"/>
        <end position="64"/>
    </location>
</feature>
<comment type="subcellular location">
    <subcellularLocation>
        <location evidence="3">Cell membrane</location>
        <topology evidence="3">Multi-pass membrane protein</topology>
    </subcellularLocation>
</comment>
<name>Y1836_MYCTO</name>
<proteinExistence type="predicted"/>
<dbReference type="EMBL" id="AE000516">
    <property type="protein sequence ID" value="AAK46155.1"/>
    <property type="molecule type" value="Genomic_DNA"/>
</dbReference>
<dbReference type="PIR" id="E70722">
    <property type="entry name" value="E70722"/>
</dbReference>
<dbReference type="RefSeq" id="WP_003901265.1">
    <property type="nucleotide sequence ID" value="NZ_KK341227.1"/>
</dbReference>
<dbReference type="SMR" id="P9WLQ8"/>
<dbReference type="KEGG" id="mtc:MT1884"/>
<dbReference type="PATRIC" id="fig|83331.31.peg.2028"/>
<dbReference type="HOGENOM" id="CLU_018489_0_0_11"/>
<dbReference type="Proteomes" id="UP000001020">
    <property type="component" value="Chromosome"/>
</dbReference>
<dbReference type="GO" id="GO:0005886">
    <property type="term" value="C:plasma membrane"/>
    <property type="evidence" value="ECO:0007669"/>
    <property type="project" value="UniProtKB-SubCell"/>
</dbReference>
<dbReference type="Gene3D" id="3.40.50.410">
    <property type="entry name" value="von Willebrand factor, type A domain"/>
    <property type="match status" value="1"/>
</dbReference>
<dbReference type="InterPro" id="IPR002035">
    <property type="entry name" value="VWF_A"/>
</dbReference>
<dbReference type="InterPro" id="IPR036465">
    <property type="entry name" value="vWFA_dom_sf"/>
</dbReference>
<dbReference type="Pfam" id="PF13531">
    <property type="entry name" value="SBP_bac_11"/>
    <property type="match status" value="1"/>
</dbReference>
<dbReference type="SMART" id="SM00327">
    <property type="entry name" value="VWA"/>
    <property type="match status" value="1"/>
</dbReference>
<dbReference type="SUPFAM" id="SSF53300">
    <property type="entry name" value="vWA-like"/>
    <property type="match status" value="1"/>
</dbReference>